<name>FLGI_SYNC1</name>
<comment type="function">
    <text evidence="1">Assembles around the rod to form the L-ring and probably protects the motor/basal body from shearing forces during rotation.</text>
</comment>
<comment type="subunit">
    <text evidence="1">The basal body constitutes a major portion of the flagellar organelle and consists of four rings (L,P,S, and M) mounted on a central rod.</text>
</comment>
<comment type="subcellular location">
    <subcellularLocation>
        <location evidence="1">Periplasm</location>
    </subcellularLocation>
    <subcellularLocation>
        <location evidence="1">Bacterial flagellum basal body</location>
    </subcellularLocation>
</comment>
<comment type="similarity">
    <text evidence="1">Belongs to the FlgI family.</text>
</comment>
<protein>
    <recommendedName>
        <fullName evidence="1">Flagellar P-ring protein</fullName>
    </recommendedName>
    <alternativeName>
        <fullName evidence="1">Basal body P-ring protein</fullName>
    </alternativeName>
</protein>
<evidence type="ECO:0000255" key="1">
    <source>
        <dbReference type="HAMAP-Rule" id="MF_00416"/>
    </source>
</evidence>
<reference key="1">
    <citation type="submission" date="2005-10" db="EMBL/GenBank/DDBJ databases">
        <title>Complete sequence of Pelobacter carbinolicus DSM 2380.</title>
        <authorList>
            <person name="Copeland A."/>
            <person name="Lucas S."/>
            <person name="Lapidus A."/>
            <person name="Barry K."/>
            <person name="Detter J.C."/>
            <person name="Glavina T."/>
            <person name="Hammon N."/>
            <person name="Israni S."/>
            <person name="Pitluck S."/>
            <person name="Chertkov O."/>
            <person name="Schmutz J."/>
            <person name="Larimer F."/>
            <person name="Land M."/>
            <person name="Kyrpides N."/>
            <person name="Ivanova N."/>
            <person name="Richardson P."/>
        </authorList>
    </citation>
    <scope>NUCLEOTIDE SEQUENCE [LARGE SCALE GENOMIC DNA]</scope>
    <source>
        <strain>DSM 2380 / NBRC 103641 / GraBd1</strain>
    </source>
</reference>
<gene>
    <name evidence="1" type="primary">flgI</name>
    <name type="ordered locus">Pcar_1153</name>
</gene>
<sequence length="367" mass="38490">MLRPIITLLCLTLMLCTAAGPAGATRIKDIARLQGVRSNQLVGYGLVVGLNGSGDSDSTAFTVRSLVNMMERLGVTVDVNDVKVDNVAAVIVTAELPAFSKTGSTIDVLVSSIGDADSLVGGSLLMTPLKGADGKIYAVAQGPLAVGALAFGGKAATVQKNHPTVGRIPGGALVEREVPFRLTPGAELHYQLTNPDFTTVTRMAQAINKHFQKTLARAEDSGSLKITIPEDQQNEPIHFIADLESLNIRPDSMARIVVNEKTGTIVMGEDVRIATVAVSHGNLNLIISENDQVSQPLPFSEGETVVVPDTSMEVSEDNGNLVVMEMGVSIGDVARALNAIGATPRDLIAIFQAIKAAGALHAELVVL</sequence>
<feature type="signal peptide" evidence="1">
    <location>
        <begin position="1"/>
        <end position="24"/>
    </location>
</feature>
<feature type="chain" id="PRO_0000236308" description="Flagellar P-ring protein">
    <location>
        <begin position="25"/>
        <end position="367"/>
    </location>
</feature>
<dbReference type="EMBL" id="CP000142">
    <property type="protein sequence ID" value="ABA88402.1"/>
    <property type="molecule type" value="Genomic_DNA"/>
</dbReference>
<dbReference type="RefSeq" id="WP_011340871.1">
    <property type="nucleotide sequence ID" value="NC_007498.2"/>
</dbReference>
<dbReference type="SMR" id="Q3A5F5"/>
<dbReference type="STRING" id="338963.Pcar_1153"/>
<dbReference type="KEGG" id="pca:Pcar_1153"/>
<dbReference type="eggNOG" id="COG1706">
    <property type="taxonomic scope" value="Bacteria"/>
</dbReference>
<dbReference type="HOGENOM" id="CLU_045235_1_0_7"/>
<dbReference type="OrthoDB" id="9786431at2"/>
<dbReference type="Proteomes" id="UP000002534">
    <property type="component" value="Chromosome"/>
</dbReference>
<dbReference type="GO" id="GO:0009428">
    <property type="term" value="C:bacterial-type flagellum basal body, distal rod, P ring"/>
    <property type="evidence" value="ECO:0007669"/>
    <property type="project" value="InterPro"/>
</dbReference>
<dbReference type="GO" id="GO:0030288">
    <property type="term" value="C:outer membrane-bounded periplasmic space"/>
    <property type="evidence" value="ECO:0007669"/>
    <property type="project" value="InterPro"/>
</dbReference>
<dbReference type="GO" id="GO:0005198">
    <property type="term" value="F:structural molecule activity"/>
    <property type="evidence" value="ECO:0007669"/>
    <property type="project" value="InterPro"/>
</dbReference>
<dbReference type="GO" id="GO:0071973">
    <property type="term" value="P:bacterial-type flagellum-dependent cell motility"/>
    <property type="evidence" value="ECO:0007669"/>
    <property type="project" value="InterPro"/>
</dbReference>
<dbReference type="HAMAP" id="MF_00416">
    <property type="entry name" value="FlgI"/>
    <property type="match status" value="1"/>
</dbReference>
<dbReference type="InterPro" id="IPR001782">
    <property type="entry name" value="Flag_FlgI"/>
</dbReference>
<dbReference type="NCBIfam" id="NF003676">
    <property type="entry name" value="PRK05303.1"/>
    <property type="match status" value="1"/>
</dbReference>
<dbReference type="PANTHER" id="PTHR30381">
    <property type="entry name" value="FLAGELLAR P-RING PERIPLASMIC PROTEIN FLGI"/>
    <property type="match status" value="1"/>
</dbReference>
<dbReference type="PANTHER" id="PTHR30381:SF0">
    <property type="entry name" value="FLAGELLAR P-RING PROTEIN"/>
    <property type="match status" value="1"/>
</dbReference>
<dbReference type="Pfam" id="PF02119">
    <property type="entry name" value="FlgI"/>
    <property type="match status" value="1"/>
</dbReference>
<dbReference type="PRINTS" id="PR01010">
    <property type="entry name" value="FLGPRINGFLGI"/>
</dbReference>
<accession>Q3A5F5</accession>
<keyword id="KW-0975">Bacterial flagellum</keyword>
<keyword id="KW-0574">Periplasm</keyword>
<keyword id="KW-1185">Reference proteome</keyword>
<keyword id="KW-0732">Signal</keyword>
<proteinExistence type="inferred from homology"/>
<organism>
    <name type="scientific">Syntrophotalea carbinolica (strain DSM 2380 / NBRC 103641 / GraBd1)</name>
    <name type="common">Pelobacter carbinolicus</name>
    <dbReference type="NCBI Taxonomy" id="338963"/>
    <lineage>
        <taxon>Bacteria</taxon>
        <taxon>Pseudomonadati</taxon>
        <taxon>Thermodesulfobacteriota</taxon>
        <taxon>Desulfuromonadia</taxon>
        <taxon>Desulfuromonadales</taxon>
        <taxon>Syntrophotaleaceae</taxon>
        <taxon>Syntrophotalea</taxon>
    </lineage>
</organism>